<organism>
    <name type="scientific">Mycosarcoma maydis</name>
    <name type="common">Corn smut fungus</name>
    <name type="synonym">Ustilago maydis</name>
    <dbReference type="NCBI Taxonomy" id="5270"/>
    <lineage>
        <taxon>Eukaryota</taxon>
        <taxon>Fungi</taxon>
        <taxon>Dikarya</taxon>
        <taxon>Basidiomycota</taxon>
        <taxon>Ustilaginomycotina</taxon>
        <taxon>Ustilaginomycetes</taxon>
        <taxon>Ustilaginales</taxon>
        <taxon>Ustilaginaceae</taxon>
        <taxon>Mycosarcoma</taxon>
    </lineage>
</organism>
<name>CHS5_MYCMD</name>
<feature type="chain" id="PRO_0000193723" description="Chitin synthase 5">
    <location>
        <begin position="1"/>
        <end position="1609"/>
    </location>
</feature>
<feature type="topological domain" description="Cytoplasmic" evidence="9">
    <location>
        <begin position="1"/>
        <end position="326"/>
    </location>
</feature>
<feature type="transmembrane region" description="Helical" evidence="2">
    <location>
        <begin position="327"/>
        <end position="347"/>
    </location>
</feature>
<feature type="topological domain" description="Extracellular" evidence="9">
    <location>
        <begin position="348"/>
        <end position="364"/>
    </location>
</feature>
<feature type="transmembrane region" description="Helical" evidence="2">
    <location>
        <begin position="365"/>
        <end position="385"/>
    </location>
</feature>
<feature type="topological domain" description="Cytoplasmic" evidence="9">
    <location>
        <begin position="386"/>
        <end position="624"/>
    </location>
</feature>
<feature type="transmembrane region" description="Helical" evidence="2">
    <location>
        <begin position="625"/>
        <end position="645"/>
    </location>
</feature>
<feature type="topological domain" description="Extracellular" evidence="9">
    <location>
        <begin position="646"/>
        <end position="1176"/>
    </location>
</feature>
<feature type="transmembrane region" description="Helical" evidence="2">
    <location>
        <begin position="1177"/>
        <end position="1197"/>
    </location>
</feature>
<feature type="topological domain" description="Cytoplasmic" evidence="9">
    <location>
        <begin position="1198"/>
        <end position="1202"/>
    </location>
</feature>
<feature type="transmembrane region" description="Helical" evidence="2">
    <location>
        <begin position="1203"/>
        <end position="1223"/>
    </location>
</feature>
<feature type="topological domain" description="Extracellular" evidence="9">
    <location>
        <begin position="1224"/>
        <end position="1227"/>
    </location>
</feature>
<feature type="transmembrane region" description="Helical" evidence="2">
    <location>
        <begin position="1228"/>
        <end position="1248"/>
    </location>
</feature>
<feature type="topological domain" description="Cytoplasmic" evidence="9">
    <location>
        <begin position="1249"/>
        <end position="1609"/>
    </location>
</feature>
<feature type="region of interest" description="Disordered" evidence="4">
    <location>
        <begin position="1"/>
        <end position="188"/>
    </location>
</feature>
<feature type="region of interest" description="Disordered" evidence="4">
    <location>
        <begin position="248"/>
        <end position="280"/>
    </location>
</feature>
<feature type="region of interest" description="Disordered" evidence="4">
    <location>
        <begin position="294"/>
        <end position="320"/>
    </location>
</feature>
<feature type="region of interest" description="Disordered" evidence="4">
    <location>
        <begin position="729"/>
        <end position="767"/>
    </location>
</feature>
<feature type="region of interest" description="Disordered" evidence="4">
    <location>
        <begin position="1354"/>
        <end position="1381"/>
    </location>
</feature>
<feature type="region of interest" description="Disordered" evidence="4">
    <location>
        <begin position="1399"/>
        <end position="1609"/>
    </location>
</feature>
<feature type="compositionally biased region" description="Polar residues" evidence="4">
    <location>
        <begin position="34"/>
        <end position="44"/>
    </location>
</feature>
<feature type="compositionally biased region" description="Low complexity" evidence="4">
    <location>
        <begin position="61"/>
        <end position="82"/>
    </location>
</feature>
<feature type="compositionally biased region" description="Polar residues" evidence="4">
    <location>
        <begin position="100"/>
        <end position="111"/>
    </location>
</feature>
<feature type="compositionally biased region" description="Basic and acidic residues" evidence="4">
    <location>
        <begin position="134"/>
        <end position="146"/>
    </location>
</feature>
<feature type="compositionally biased region" description="Polar residues" evidence="4">
    <location>
        <begin position="147"/>
        <end position="163"/>
    </location>
</feature>
<feature type="compositionally biased region" description="Low complexity" evidence="4">
    <location>
        <begin position="253"/>
        <end position="267"/>
    </location>
</feature>
<feature type="compositionally biased region" description="Basic and acidic residues" evidence="4">
    <location>
        <begin position="307"/>
        <end position="320"/>
    </location>
</feature>
<feature type="compositionally biased region" description="Low complexity" evidence="4">
    <location>
        <begin position="742"/>
        <end position="752"/>
    </location>
</feature>
<feature type="compositionally biased region" description="Polar residues" evidence="4">
    <location>
        <begin position="1502"/>
        <end position="1514"/>
    </location>
</feature>
<feature type="compositionally biased region" description="Polar residues" evidence="4">
    <location>
        <begin position="1530"/>
        <end position="1552"/>
    </location>
</feature>
<feature type="compositionally biased region" description="Low complexity" evidence="4">
    <location>
        <begin position="1568"/>
        <end position="1588"/>
    </location>
</feature>
<feature type="glycosylation site" description="N-linked (GlcNAc...) asparagine" evidence="3">
    <location>
        <position position="654"/>
    </location>
</feature>
<feature type="glycosylation site" description="N-linked (GlcNAc...) asparagine" evidence="3">
    <location>
        <position position="1015"/>
    </location>
</feature>
<feature type="glycosylation site" description="N-linked (GlcNAc...) asparagine" evidence="3">
    <location>
        <position position="1144"/>
    </location>
</feature>
<feature type="sequence conflict" description="In Ref. 1; AAB84284." evidence="9" ref="1">
    <original>I</original>
    <variation>S</variation>
    <location>
        <position position="54"/>
    </location>
</feature>
<feature type="sequence conflict" description="In Ref. 1; AAB84284." evidence="9" ref="1">
    <location>
        <begin position="75"/>
        <end position="76"/>
    </location>
</feature>
<proteinExistence type="evidence at transcript level"/>
<gene>
    <name evidence="8" type="primary">CHS5</name>
    <name type="ORF">UMAG_10277</name>
</gene>
<dbReference type="EC" id="2.4.1.16" evidence="10"/>
<dbReference type="EMBL" id="AF030553">
    <property type="protein sequence ID" value="AAB84284.1"/>
    <property type="status" value="ALT_SEQ"/>
    <property type="molecule type" value="Genomic_DNA"/>
</dbReference>
<dbReference type="EMBL" id="CM003145">
    <property type="protein sequence ID" value="KIS69221.1"/>
    <property type="molecule type" value="Genomic_DNA"/>
</dbReference>
<dbReference type="PIR" id="T42020">
    <property type="entry name" value="T42020"/>
</dbReference>
<dbReference type="RefSeq" id="XP_011389165.1">
    <property type="nucleotide sequence ID" value="XM_011390863.1"/>
</dbReference>
<dbReference type="STRING" id="237631.O13394"/>
<dbReference type="CAZy" id="GT2">
    <property type="family name" value="Glycosyltransferase Family 2"/>
</dbReference>
<dbReference type="GlyCosmos" id="O13394">
    <property type="glycosylation" value="3 sites, No reported glycans"/>
</dbReference>
<dbReference type="EnsemblFungi" id="KIS69221">
    <property type="protein sequence ID" value="KIS69221"/>
    <property type="gene ID" value="UMAG_10277"/>
</dbReference>
<dbReference type="GeneID" id="23566330"/>
<dbReference type="KEGG" id="uma:UMAG_10277"/>
<dbReference type="VEuPathDB" id="FungiDB:UMAG_10277"/>
<dbReference type="eggNOG" id="KOG2571">
    <property type="taxonomic scope" value="Eukaryota"/>
</dbReference>
<dbReference type="InParanoid" id="O13394"/>
<dbReference type="OrthoDB" id="370884at2759"/>
<dbReference type="BRENDA" id="2.4.1.16">
    <property type="organism ID" value="6587"/>
</dbReference>
<dbReference type="PHI-base" id="PHI:98"/>
<dbReference type="Proteomes" id="UP000000561">
    <property type="component" value="Chromosome 6"/>
</dbReference>
<dbReference type="GO" id="GO:0071944">
    <property type="term" value="C:cell periphery"/>
    <property type="evidence" value="ECO:0000318"/>
    <property type="project" value="GO_Central"/>
</dbReference>
<dbReference type="GO" id="GO:0030428">
    <property type="term" value="C:cell septum"/>
    <property type="evidence" value="ECO:0000318"/>
    <property type="project" value="GO_Central"/>
</dbReference>
<dbReference type="GO" id="GO:0030659">
    <property type="term" value="C:cytoplasmic vesicle membrane"/>
    <property type="evidence" value="ECO:0007669"/>
    <property type="project" value="UniProtKB-SubCell"/>
</dbReference>
<dbReference type="GO" id="GO:0005886">
    <property type="term" value="C:plasma membrane"/>
    <property type="evidence" value="ECO:0007669"/>
    <property type="project" value="UniProtKB-SubCell"/>
</dbReference>
<dbReference type="GO" id="GO:0004100">
    <property type="term" value="F:chitin synthase activity"/>
    <property type="evidence" value="ECO:0000318"/>
    <property type="project" value="GO_Central"/>
</dbReference>
<dbReference type="GO" id="GO:0071555">
    <property type="term" value="P:cell wall organization"/>
    <property type="evidence" value="ECO:0007669"/>
    <property type="project" value="UniProtKB-KW"/>
</dbReference>
<dbReference type="GO" id="GO:0006031">
    <property type="term" value="P:chitin biosynthetic process"/>
    <property type="evidence" value="ECO:0000318"/>
    <property type="project" value="GO_Central"/>
</dbReference>
<dbReference type="CDD" id="cd04190">
    <property type="entry name" value="Chitin_synth_C"/>
    <property type="match status" value="1"/>
</dbReference>
<dbReference type="Gene3D" id="3.90.550.10">
    <property type="entry name" value="Spore Coat Polysaccharide Biosynthesis Protein SpsA, Chain A"/>
    <property type="match status" value="1"/>
</dbReference>
<dbReference type="InterPro" id="IPR004835">
    <property type="entry name" value="Chitin_synth"/>
</dbReference>
<dbReference type="InterPro" id="IPR054295">
    <property type="entry name" value="CHS4-like_dom"/>
</dbReference>
<dbReference type="InterPro" id="IPR029044">
    <property type="entry name" value="Nucleotide-diphossugar_trans"/>
</dbReference>
<dbReference type="PANTHER" id="PTHR22914">
    <property type="entry name" value="CHITIN SYNTHASE"/>
    <property type="match status" value="1"/>
</dbReference>
<dbReference type="PANTHER" id="PTHR22914:SF16">
    <property type="entry name" value="CHITIN SYNTHASE 3"/>
    <property type="match status" value="1"/>
</dbReference>
<dbReference type="Pfam" id="PF03142">
    <property type="entry name" value="Chitin_synth_2"/>
    <property type="match status" value="1"/>
</dbReference>
<dbReference type="Pfam" id="PF22997">
    <property type="entry name" value="CHS4"/>
    <property type="match status" value="1"/>
</dbReference>
<dbReference type="SUPFAM" id="SSF53448">
    <property type="entry name" value="Nucleotide-diphospho-sugar transferases"/>
    <property type="match status" value="1"/>
</dbReference>
<keyword id="KW-1003">Cell membrane</keyword>
<keyword id="KW-0961">Cell wall biogenesis/degradation</keyword>
<keyword id="KW-0968">Cytoplasmic vesicle</keyword>
<keyword id="KW-0325">Glycoprotein</keyword>
<keyword id="KW-0328">Glycosyltransferase</keyword>
<keyword id="KW-0472">Membrane</keyword>
<keyword id="KW-1185">Reference proteome</keyword>
<keyword id="KW-0808">Transferase</keyword>
<keyword id="KW-0812">Transmembrane</keyword>
<keyword id="KW-1133">Transmembrane helix</keyword>
<accession>O13394</accession>
<accession>A0A0D1DZZ4</accession>
<accession>Q4PBE4</accession>
<evidence type="ECO:0000250" key="1"/>
<evidence type="ECO:0000255" key="2"/>
<evidence type="ECO:0000255" key="3">
    <source>
        <dbReference type="PROSITE-ProRule" id="PRU00498"/>
    </source>
</evidence>
<evidence type="ECO:0000256" key="4">
    <source>
        <dbReference type="SAM" id="MobiDB-lite"/>
    </source>
</evidence>
<evidence type="ECO:0000269" key="5">
    <source>
    </source>
</evidence>
<evidence type="ECO:0000269" key="6">
    <source>
    </source>
</evidence>
<evidence type="ECO:0000269" key="7">
    <source>
    </source>
</evidence>
<evidence type="ECO:0000303" key="8">
    <source>
    </source>
</evidence>
<evidence type="ECO:0000305" key="9"/>
<evidence type="ECO:0000305" key="10">
    <source ref="3"/>
</evidence>
<comment type="function">
    <text evidence="5 7">Polymerizes chitin, a structural polymer of the cell wall and septum, by transferring the sugar moiety of UDP-GlcNAc to the non-reducing end of the growing chitin polymer.</text>
</comment>
<comment type="catalytic activity">
    <reaction evidence="10">
        <text>[(1-&gt;4)-N-acetyl-beta-D-glucosaminyl](n) + UDP-N-acetyl-alpha-D-glucosamine = [(1-&gt;4)-N-acetyl-beta-D-glucosaminyl](n+1) + UDP + H(+)</text>
        <dbReference type="Rhea" id="RHEA:16637"/>
        <dbReference type="Rhea" id="RHEA-COMP:9593"/>
        <dbReference type="Rhea" id="RHEA-COMP:9595"/>
        <dbReference type="ChEBI" id="CHEBI:15378"/>
        <dbReference type="ChEBI" id="CHEBI:17029"/>
        <dbReference type="ChEBI" id="CHEBI:57705"/>
        <dbReference type="ChEBI" id="CHEBI:58223"/>
        <dbReference type="EC" id="2.4.1.16"/>
    </reaction>
    <physiologicalReaction direction="left-to-right" evidence="10">
        <dbReference type="Rhea" id="RHEA:16638"/>
    </physiologicalReaction>
</comment>
<comment type="subcellular location">
    <subcellularLocation>
        <location evidence="5">Cell membrane</location>
        <topology evidence="5">Multi-pass membrane protein</topology>
    </subcellularLocation>
    <subcellularLocation>
        <location evidence="5">Cytoplasmic vesicle membrane</location>
        <topology evidence="5">Multi-pass membrane protein</topology>
    </subcellularLocation>
    <text evidence="1">A constitutive cytoplasmic pool is present that localizes to intracellular microvesicles termed chitosomes. Chitosomes constitute a separate secretory route distinct from the typical secretory pathway and serve as a vehicle for delivering the enzyme to the sites on the cell surface where polysaccharide sythesis takes place (By similarity). Localizes to septa of yeast-like cells and to the basal septum separating the living tip cell from the vacuolated part in hyphae. Also localizes to the growing bud tip in yeast-like cells and in a tip-ward gradient at the hyphal apex.</text>
</comment>
<comment type="induction">
    <text evidence="6">Expression is slightly lower in the yeast form than in the mycelium and shows a maximal expression in the log phase at about 14-18 h of incubation.</text>
</comment>
<comment type="similarity">
    <text evidence="9">Belongs to the chitin synthase family. Class IV subfamily.</text>
</comment>
<comment type="sequence caution" evidence="9">
    <conflict type="erroneous gene model prediction">
        <sequence resource="EMBL-CDS" id="AAB84284"/>
    </conflict>
</comment>
<comment type="sequence caution" evidence="9">
    <conflict type="frameshift">
        <sequence resource="EMBL-CDS" id="AAB84284"/>
    </conflict>
</comment>
<reference key="1">
    <citation type="journal article" date="1997" name="Fungal Genet. Biol.">
        <title>Umchs5, a gene coding for a class IV chitin synthase in Ustilago maydis.</title>
        <authorList>
            <person name="Xoconostle-Cazares B."/>
            <person name="Specht C.A."/>
            <person name="Robbins P.W."/>
            <person name="Liu Y."/>
            <person name="Leon C."/>
            <person name="Ruiz-Herrera J."/>
        </authorList>
    </citation>
    <scope>NUCLEOTIDE SEQUENCE [GENOMIC DNA]</scope>
    <scope>FUNCTION</scope>
    <source>
        <strain>518</strain>
    </source>
</reference>
<reference key="2">
    <citation type="journal article" date="2006" name="Nature">
        <title>Insights from the genome of the biotrophic fungal plant pathogen Ustilago maydis.</title>
        <authorList>
            <person name="Kaemper J."/>
            <person name="Kahmann R."/>
            <person name="Boelker M."/>
            <person name="Ma L.-J."/>
            <person name="Brefort T."/>
            <person name="Saville B.J."/>
            <person name="Banuett F."/>
            <person name="Kronstad J.W."/>
            <person name="Gold S.E."/>
            <person name="Mueller O."/>
            <person name="Perlin M.H."/>
            <person name="Woesten H.A.B."/>
            <person name="de Vries R."/>
            <person name="Ruiz-Herrera J."/>
            <person name="Reynaga-Pena C.G."/>
            <person name="Snetselaar K."/>
            <person name="McCann M."/>
            <person name="Perez-Martin J."/>
            <person name="Feldbruegge M."/>
            <person name="Basse C.W."/>
            <person name="Steinberg G."/>
            <person name="Ibeas J.I."/>
            <person name="Holloman W."/>
            <person name="Guzman P."/>
            <person name="Farman M.L."/>
            <person name="Stajich J.E."/>
            <person name="Sentandreu R."/>
            <person name="Gonzalez-Prieto J.M."/>
            <person name="Kennell J.C."/>
            <person name="Molina L."/>
            <person name="Schirawski J."/>
            <person name="Mendoza-Mendoza A."/>
            <person name="Greilinger D."/>
            <person name="Muench K."/>
            <person name="Roessel N."/>
            <person name="Scherer M."/>
            <person name="Vranes M."/>
            <person name="Ladendorf O."/>
            <person name="Vincon V."/>
            <person name="Fuchs U."/>
            <person name="Sandrock B."/>
            <person name="Meng S."/>
            <person name="Ho E.C.H."/>
            <person name="Cahill M.J."/>
            <person name="Boyce K.J."/>
            <person name="Klose J."/>
            <person name="Klosterman S.J."/>
            <person name="Deelstra H.J."/>
            <person name="Ortiz-Castellanos L."/>
            <person name="Li W."/>
            <person name="Sanchez-Alonso P."/>
            <person name="Schreier P.H."/>
            <person name="Haeuser-Hahn I."/>
            <person name="Vaupel M."/>
            <person name="Koopmann E."/>
            <person name="Friedrich G."/>
            <person name="Voss H."/>
            <person name="Schlueter T."/>
            <person name="Margolis J."/>
            <person name="Platt D."/>
            <person name="Swimmer C."/>
            <person name="Gnirke A."/>
            <person name="Chen F."/>
            <person name="Vysotskaia V."/>
            <person name="Mannhaupt G."/>
            <person name="Gueldener U."/>
            <person name="Muensterkoetter M."/>
            <person name="Haase D."/>
            <person name="Oesterheld M."/>
            <person name="Mewes H.-W."/>
            <person name="Mauceli E.W."/>
            <person name="DeCaprio D."/>
            <person name="Wade C.M."/>
            <person name="Butler J."/>
            <person name="Young S.K."/>
            <person name="Jaffe D.B."/>
            <person name="Calvo S.E."/>
            <person name="Nusbaum C."/>
            <person name="Galagan J.E."/>
            <person name="Birren B.W."/>
        </authorList>
    </citation>
    <scope>NUCLEOTIDE SEQUENCE [LARGE SCALE GENOMIC DNA]</scope>
    <source>
        <strain>DSM 14603 / FGSC 9021 / UM521</strain>
    </source>
</reference>
<reference key="3">
    <citation type="submission" date="2014-09" db="EMBL/GenBank/DDBJ databases">
        <authorList>
            <person name="Gueldener U."/>
            <person name="Muensterkoetter M."/>
            <person name="Walter M.C."/>
            <person name="Mannhaupt G."/>
            <person name="Kahmann R."/>
        </authorList>
    </citation>
    <scope>GENOME REANNOTATION</scope>
    <source>
        <strain>DSM 14603 / FGSC 9021 / UM521</strain>
    </source>
</reference>
<reference key="4">
    <citation type="journal article" date="2006" name="Plant Cell">
        <title>Polar localizing class V myosin chitin synthases are essential during early plant infection in the plant pathogenic fungus Ustilago maydis.</title>
        <authorList>
            <person name="Weber I."/>
            <person name="Assmann D."/>
            <person name="Thines E."/>
            <person name="Steinberg G."/>
        </authorList>
    </citation>
    <scope>FUNCTION</scope>
    <scope>SUBCELLULAR LOCATION</scope>
</reference>
<reference key="5">
    <citation type="journal article" date="2012" name="Curr. Microbiol.">
        <title>Transcriptional regulation of the genes encoding chitin and beta-1,3-glucan synthases from Ustilago maydis.</title>
        <authorList>
            <person name="Robledo-Briones M."/>
            <person name="Ruiz-Herrera J."/>
        </authorList>
    </citation>
    <scope>INDUCTION</scope>
</reference>
<protein>
    <recommendedName>
        <fullName evidence="8">Chitin synthase 5</fullName>
        <ecNumber evidence="10">2.4.1.16</ecNumber>
    </recommendedName>
    <alternativeName>
        <fullName evidence="9">Chitin-UDP acetyl-glucosaminyl transferase 5</fullName>
    </alternativeName>
    <alternativeName>
        <fullName evidence="8">Class-IV chitin synthase 5</fullName>
    </alternativeName>
</protein>
<sequence length="1609" mass="176298">MNPFESLPDAARPAQGTRPNRSDGPPPLPPLTIPGSTGRPQNPIFSPPPNLHHILPPGYLPQQQQQQQQQQQQQQQRSQQPFFSPPPPDAMSPPLGSHQAYLNSTSSQPTQRLPGISFQEPQRMPVQRSGPSRDSVKSYGDDKRSINDPNSSSTALTQVNSLDPESGFSAHNDTFRRKKSLVRPDRERMDPSHRQWYYRNHAAHMDVMAASGGRVGYMPSTTGHLPQHGAAPHGSGMAGIVGPGGGLSGLGVTGPTNVPPGGLGRAPPLRRGKSLLGRDEDQVETGINVLKRGVSLRRKQSKSGNKPSKEVPRDLGESKTSRIAPGPVGGWMIYCYILTICCPGPFLRIFGIRTPEQQRAWREKMGLIGIITLIMAAVGFLTFGFTQTVCGQQPDRYTLGTIDVGSMTFNGYDYSFDGFIHPQVGPFGADTIYNRTNPIYSEPWSSGGQDGSLLFQKIGAACTGIISNRAGGAQPERYFDCTLVRQDGKGGYANSTMPMCHTGSIVDQFNDGAQPRNSVLKKRGQVSLQWNNVTDPARNLAVYRGSVLDLNRLNNLTTGLSYPELYDTLKRRNDSWAGRDVTSAVMRQRLEREFQCLEQITRVGFIDSETIGCVASKVELYLSLVFIIGVVAIKFFMAVMFGWFISWRLGNYANETYEQRMKRAAEIEQWSDDIYRPAPAGYRPNARKHKSFLPAKSRFSVADPLSLKSGSRAPMPLSEKRMTRASRLGVASPLGGSPPGSPSVAGGRSSASLAPAHSRRSSFSGSPAEGAMGVCPFPLHNTIPQPGPDYRPFGFQLAHSICLVTAYSESFEGLRTTLDSLATTDYPNSHKLLLVIADGIVKGAGSDISTPDICLSMMKDLVIPAEEVEGNSYVAIADGYKRHNMCKIYAGFYDYDDETVERSKQQRVPMILVAKCGTPLEADSAKPGNRGKRDSQVLLMAFMQKVMFDERMTAFEYEFFNSIWRVTGVSPDNYEIVLCVDADTKVFPDSLSRMVACMVEDPEIMGLCGETKIANKSETWVTMIQVFEYYISHHQTKAFEACFGGVTCLPGCFSAYRIKAPKGPHGYWVPILANPDIVEHYSENVVDTLHKKNLLLLGEDRYLTTLMLKTFPKRKMMFVPQAVCKTIVPDTFRILLSQRRRWINSTVHNLFELVMVNDLCGTFCFSMRFVVFMELTGTLVLPAAIAFTLYVVVQAFLPNVPTPTIPLILLALILGLPGILIVVTSRKIAYVGWMLIYLLSLPIWNFVLPLYAYWHMDDFSWGATRVVQGENKKDNHGDADGKFDPSHIVMKRWAEFERERRWKSGTHSRDSTYDVVQRTGSPERAGSTRYSVVSSDTFHSSPFGQHDQFGRALPNAMSSSSASQFGPDVSEVSHSKSPSGARARLDAVPLLELPAPLATDAKHRSGASPTGTVVVPRPRATSPAPLPHNSGHPALGSVSAFSPTQHSAGRLPTLPGAATYEAYPHTDAADEERRPMIGSTSSSPDPEPRRYIGPDAGVRHGNVSTEQRYPTVSESAYPMQAYTAEPETDGSASPTPAQQGFNAANSNQQTRPLTRGFSLVDDGPVASAQGVRQVQRGARRSQMPNSAASPPPANRTGNLPPGAAPPSFD</sequence>